<organism>
    <name type="scientific">Wolbachia pipientis wMel</name>
    <dbReference type="NCBI Taxonomy" id="163164"/>
    <lineage>
        <taxon>Bacteria</taxon>
        <taxon>Pseudomonadati</taxon>
        <taxon>Pseudomonadota</taxon>
        <taxon>Alphaproteobacteria</taxon>
        <taxon>Rickettsiales</taxon>
        <taxon>Anaplasmataceae</taxon>
        <taxon>Wolbachieae</taxon>
        <taxon>Wolbachia</taxon>
    </lineage>
</organism>
<keyword id="KW-0030">Aminoacyl-tRNA synthetase</keyword>
<keyword id="KW-0067">ATP-binding</keyword>
<keyword id="KW-0963">Cytoplasm</keyword>
<keyword id="KW-0436">Ligase</keyword>
<keyword id="KW-0547">Nucleotide-binding</keyword>
<keyword id="KW-0648">Protein biosynthesis</keyword>
<protein>
    <recommendedName>
        <fullName evidence="1">Aspartate--tRNA(Asp/Asn) ligase</fullName>
        <ecNumber evidence="1">6.1.1.23</ecNumber>
    </recommendedName>
    <alternativeName>
        <fullName evidence="1">Aspartyl-tRNA synthetase</fullName>
        <shortName evidence="1">AspRS</shortName>
    </alternativeName>
    <alternativeName>
        <fullName evidence="1">Non-discriminating aspartyl-tRNA synthetase</fullName>
        <shortName evidence="1">ND-AspRS</shortName>
    </alternativeName>
</protein>
<feature type="chain" id="PRO_0000110980" description="Aspartate--tRNA(Asp/Asn) ligase">
    <location>
        <begin position="1"/>
        <end position="600"/>
    </location>
</feature>
<feature type="region of interest" description="Aspartate" evidence="1">
    <location>
        <begin position="211"/>
        <end position="214"/>
    </location>
</feature>
<feature type="binding site" evidence="1">
    <location>
        <position position="187"/>
    </location>
    <ligand>
        <name>L-aspartate</name>
        <dbReference type="ChEBI" id="CHEBI:29991"/>
    </ligand>
</feature>
<feature type="binding site" evidence="1">
    <location>
        <begin position="233"/>
        <end position="235"/>
    </location>
    <ligand>
        <name>ATP</name>
        <dbReference type="ChEBI" id="CHEBI:30616"/>
    </ligand>
</feature>
<feature type="binding site" evidence="1">
    <location>
        <position position="233"/>
    </location>
    <ligand>
        <name>L-aspartate</name>
        <dbReference type="ChEBI" id="CHEBI:29991"/>
    </ligand>
</feature>
<feature type="binding site" evidence="1">
    <location>
        <position position="463"/>
    </location>
    <ligand>
        <name>L-aspartate</name>
        <dbReference type="ChEBI" id="CHEBI:29991"/>
    </ligand>
</feature>
<feature type="binding site" evidence="1">
    <location>
        <position position="497"/>
    </location>
    <ligand>
        <name>ATP</name>
        <dbReference type="ChEBI" id="CHEBI:30616"/>
    </ligand>
</feature>
<feature type="binding site" evidence="1">
    <location>
        <position position="504"/>
    </location>
    <ligand>
        <name>L-aspartate</name>
        <dbReference type="ChEBI" id="CHEBI:29991"/>
    </ligand>
</feature>
<feature type="binding site" evidence="1">
    <location>
        <begin position="549"/>
        <end position="552"/>
    </location>
    <ligand>
        <name>ATP</name>
        <dbReference type="ChEBI" id="CHEBI:30616"/>
    </ligand>
</feature>
<feature type="site" description="Important for tRNA non-discrimination" evidence="1">
    <location>
        <position position="33"/>
    </location>
</feature>
<dbReference type="EC" id="6.1.1.23" evidence="1"/>
<dbReference type="EMBL" id="AE017196">
    <property type="protein sequence ID" value="AAS14137.1"/>
    <property type="molecule type" value="Genomic_DNA"/>
</dbReference>
<dbReference type="RefSeq" id="WP_010962572.1">
    <property type="nucleotide sequence ID" value="NZ_OX384529.1"/>
</dbReference>
<dbReference type="SMR" id="Q73HX6"/>
<dbReference type="EnsemblBacteria" id="AAS14137">
    <property type="protein sequence ID" value="AAS14137"/>
    <property type="gene ID" value="WD_0413"/>
</dbReference>
<dbReference type="GeneID" id="70035905"/>
<dbReference type="KEGG" id="wol:WD_0413"/>
<dbReference type="eggNOG" id="COG0173">
    <property type="taxonomic scope" value="Bacteria"/>
</dbReference>
<dbReference type="Proteomes" id="UP000008215">
    <property type="component" value="Chromosome"/>
</dbReference>
<dbReference type="GO" id="GO:0005737">
    <property type="term" value="C:cytoplasm"/>
    <property type="evidence" value="ECO:0007669"/>
    <property type="project" value="UniProtKB-SubCell"/>
</dbReference>
<dbReference type="GO" id="GO:0004815">
    <property type="term" value="F:aspartate-tRNA ligase activity"/>
    <property type="evidence" value="ECO:0007669"/>
    <property type="project" value="UniProtKB-UniRule"/>
</dbReference>
<dbReference type="GO" id="GO:0050560">
    <property type="term" value="F:aspartate-tRNA(Asn) ligase activity"/>
    <property type="evidence" value="ECO:0007669"/>
    <property type="project" value="UniProtKB-EC"/>
</dbReference>
<dbReference type="GO" id="GO:0005524">
    <property type="term" value="F:ATP binding"/>
    <property type="evidence" value="ECO:0007669"/>
    <property type="project" value="UniProtKB-UniRule"/>
</dbReference>
<dbReference type="GO" id="GO:0003676">
    <property type="term" value="F:nucleic acid binding"/>
    <property type="evidence" value="ECO:0007669"/>
    <property type="project" value="InterPro"/>
</dbReference>
<dbReference type="GO" id="GO:0006422">
    <property type="term" value="P:aspartyl-tRNA aminoacylation"/>
    <property type="evidence" value="ECO:0007669"/>
    <property type="project" value="UniProtKB-UniRule"/>
</dbReference>
<dbReference type="CDD" id="cd00777">
    <property type="entry name" value="AspRS_core"/>
    <property type="match status" value="1"/>
</dbReference>
<dbReference type="CDD" id="cd04317">
    <property type="entry name" value="EcAspRS_like_N"/>
    <property type="match status" value="1"/>
</dbReference>
<dbReference type="Gene3D" id="3.30.930.10">
    <property type="entry name" value="Bira Bifunctional Protein, Domain 2"/>
    <property type="match status" value="1"/>
</dbReference>
<dbReference type="Gene3D" id="3.30.1360.30">
    <property type="entry name" value="GAD-like domain"/>
    <property type="match status" value="1"/>
</dbReference>
<dbReference type="Gene3D" id="2.40.50.140">
    <property type="entry name" value="Nucleic acid-binding proteins"/>
    <property type="match status" value="1"/>
</dbReference>
<dbReference type="HAMAP" id="MF_00044">
    <property type="entry name" value="Asp_tRNA_synth_type1"/>
    <property type="match status" value="1"/>
</dbReference>
<dbReference type="InterPro" id="IPR004364">
    <property type="entry name" value="Aa-tRNA-synt_II"/>
</dbReference>
<dbReference type="InterPro" id="IPR006195">
    <property type="entry name" value="aa-tRNA-synth_II"/>
</dbReference>
<dbReference type="InterPro" id="IPR045864">
    <property type="entry name" value="aa-tRNA-synth_II/BPL/LPL"/>
</dbReference>
<dbReference type="InterPro" id="IPR004524">
    <property type="entry name" value="Asp-tRNA-ligase_1"/>
</dbReference>
<dbReference type="InterPro" id="IPR047089">
    <property type="entry name" value="Asp-tRNA-ligase_1_N"/>
</dbReference>
<dbReference type="InterPro" id="IPR002312">
    <property type="entry name" value="Asp/Asn-tRNA-synth_IIb"/>
</dbReference>
<dbReference type="InterPro" id="IPR047090">
    <property type="entry name" value="AspRS_core"/>
</dbReference>
<dbReference type="InterPro" id="IPR004115">
    <property type="entry name" value="GAD-like_sf"/>
</dbReference>
<dbReference type="InterPro" id="IPR029351">
    <property type="entry name" value="GAD_dom"/>
</dbReference>
<dbReference type="InterPro" id="IPR012340">
    <property type="entry name" value="NA-bd_OB-fold"/>
</dbReference>
<dbReference type="InterPro" id="IPR004365">
    <property type="entry name" value="NA-bd_OB_tRNA"/>
</dbReference>
<dbReference type="NCBIfam" id="TIGR00459">
    <property type="entry name" value="aspS_bact"/>
    <property type="match status" value="1"/>
</dbReference>
<dbReference type="NCBIfam" id="NF001750">
    <property type="entry name" value="PRK00476.1"/>
    <property type="match status" value="1"/>
</dbReference>
<dbReference type="PANTHER" id="PTHR22594:SF5">
    <property type="entry name" value="ASPARTATE--TRNA LIGASE, MITOCHONDRIAL"/>
    <property type="match status" value="1"/>
</dbReference>
<dbReference type="PANTHER" id="PTHR22594">
    <property type="entry name" value="ASPARTYL/LYSYL-TRNA SYNTHETASE"/>
    <property type="match status" value="1"/>
</dbReference>
<dbReference type="Pfam" id="PF02938">
    <property type="entry name" value="GAD"/>
    <property type="match status" value="1"/>
</dbReference>
<dbReference type="Pfam" id="PF00152">
    <property type="entry name" value="tRNA-synt_2"/>
    <property type="match status" value="1"/>
</dbReference>
<dbReference type="Pfam" id="PF01336">
    <property type="entry name" value="tRNA_anti-codon"/>
    <property type="match status" value="1"/>
</dbReference>
<dbReference type="PRINTS" id="PR01042">
    <property type="entry name" value="TRNASYNTHASP"/>
</dbReference>
<dbReference type="SUPFAM" id="SSF55681">
    <property type="entry name" value="Class II aaRS and biotin synthetases"/>
    <property type="match status" value="1"/>
</dbReference>
<dbReference type="SUPFAM" id="SSF55261">
    <property type="entry name" value="GAD domain-like"/>
    <property type="match status" value="1"/>
</dbReference>
<dbReference type="SUPFAM" id="SSF50249">
    <property type="entry name" value="Nucleic acid-binding proteins"/>
    <property type="match status" value="1"/>
</dbReference>
<dbReference type="PROSITE" id="PS50862">
    <property type="entry name" value="AA_TRNA_LIGASE_II"/>
    <property type="match status" value="1"/>
</dbReference>
<gene>
    <name evidence="1" type="primary">aspS</name>
    <name type="ordered locus">WD_0413</name>
</gene>
<comment type="function">
    <text evidence="1">Aspartyl-tRNA synthetase with relaxed tRNA specificity since it is able to aspartylate not only its cognate tRNA(Asp) but also tRNA(Asn). Reaction proceeds in two steps: L-aspartate is first activated by ATP to form Asp-AMP and then transferred to the acceptor end of tRNA(Asp/Asn).</text>
</comment>
<comment type="catalytic activity">
    <reaction evidence="1">
        <text>tRNA(Asx) + L-aspartate + ATP = L-aspartyl-tRNA(Asx) + AMP + diphosphate</text>
        <dbReference type="Rhea" id="RHEA:18349"/>
        <dbReference type="Rhea" id="RHEA-COMP:9710"/>
        <dbReference type="Rhea" id="RHEA-COMP:9711"/>
        <dbReference type="ChEBI" id="CHEBI:29991"/>
        <dbReference type="ChEBI" id="CHEBI:30616"/>
        <dbReference type="ChEBI" id="CHEBI:33019"/>
        <dbReference type="ChEBI" id="CHEBI:78442"/>
        <dbReference type="ChEBI" id="CHEBI:78516"/>
        <dbReference type="ChEBI" id="CHEBI:456215"/>
        <dbReference type="EC" id="6.1.1.23"/>
    </reaction>
</comment>
<comment type="subunit">
    <text evidence="1">Homodimer.</text>
</comment>
<comment type="subcellular location">
    <subcellularLocation>
        <location evidence="1">Cytoplasm</location>
    </subcellularLocation>
</comment>
<comment type="similarity">
    <text evidence="1">Belongs to the class-II aminoacyl-tRNA synthetase family. Type 1 subfamily.</text>
</comment>
<reference key="1">
    <citation type="journal article" date="2004" name="PLoS Biol.">
        <title>Phylogenomics of the reproductive parasite Wolbachia pipientis wMel: a streamlined genome overrun by mobile genetic elements.</title>
        <authorList>
            <person name="Wu M."/>
            <person name="Sun L.V."/>
            <person name="Vamathevan J.J."/>
            <person name="Riegler M."/>
            <person name="DeBoy R.T."/>
            <person name="Brownlie J.C."/>
            <person name="McGraw E.A."/>
            <person name="Martin W."/>
            <person name="Esser C."/>
            <person name="Ahmadinejad N."/>
            <person name="Wiegand C."/>
            <person name="Madupu R."/>
            <person name="Beanan M.J."/>
            <person name="Brinkac L.M."/>
            <person name="Daugherty S.C."/>
            <person name="Durkin A.S."/>
            <person name="Kolonay J.F."/>
            <person name="Nelson W.C."/>
            <person name="Mohamoud Y."/>
            <person name="Lee P."/>
            <person name="Berry K.J."/>
            <person name="Young M.B."/>
            <person name="Utterback T.R."/>
            <person name="Weidman J.F."/>
            <person name="Nierman W.C."/>
            <person name="Paulsen I.T."/>
            <person name="Nelson K.E."/>
            <person name="Tettelin H."/>
            <person name="O'Neill S.L."/>
            <person name="Eisen J.A."/>
        </authorList>
    </citation>
    <scope>NUCLEOTIDE SEQUENCE [LARGE SCALE GENOMIC DNA]</scope>
</reference>
<sequence length="600" mass="68838">MNCYKTHTCEELRKNDVEKEVTLSGWLYRKRDHGNLIFVDLRDFYGITQLVFNNDKDFFDEISNLKLESVITVTGIVEARTEDTVNSSISTGEIEVIVNNLRVESEVEFHFDEEIAKEERSILVSITGEQEYPENMRFKYRFLDLRREKVRNNIILRSQIIAELRKLMIERGFLEIQTPILTASSPEGARDYLVPSRLNPGKFYALPQAPQIFKQLLMVSGFDKYFQIAPCFRDEDARADRSPGEFYQLDLEMSFVTQEDIFQIIESTLYRVFAKFSRKSVDKDFPRITYKEAMLKYGSDKPDLRNPLLISDVTEIFRDSGFNIFKSNIERGMVVRAIPAPKTAEEPRSFFDKKIEHAQKEFGAKGLGYITFDKDGTAKGPIAKFLDENRLNHIREATNIEPGDSVFFASDKENEAANIAGKVRTLLGSELSLIDDNIFRFCWIIDFPYFVYDDKSKKIDFFHNPFSMPHGGLKDLEDKNPLDILAYQYDLVCNGIELSSGAIRNNKLDIMYKAFAIAGYSRGEVDTRFGALVRAFRFGVPPHGGIAPGVDRIVMLLADEPNIREVICFPMNQQGEDVLMGAPSKVEDKHLRELSLKVIE</sequence>
<proteinExistence type="inferred from homology"/>
<accession>Q73HX6</accession>
<evidence type="ECO:0000255" key="1">
    <source>
        <dbReference type="HAMAP-Rule" id="MF_00044"/>
    </source>
</evidence>
<name>SYDND_WOLPM</name>